<accession>Q62511</accession>
<accession>Q3TEQ3</accession>
<accession>Q3UH61</accession>
<accession>Q62509</accession>
<accession>Q6P219</accession>
<accession>Q6PG06</accession>
<accession>Q8BPY3</accession>
<accession>Q8C2B4</accession>
<accession>Q8CDZ3</accession>
<protein>
    <recommendedName>
        <fullName>E3 ubiquitin-protein ligase ZFP91</fullName>
        <ecNumber>2.3.2.27</ecNumber>
    </recommendedName>
    <alternativeName>
        <fullName>Penta Zf protein</fullName>
    </alternativeName>
    <alternativeName>
        <fullName>RING-type E3 ubiquitin transferase ZFP91</fullName>
    </alternativeName>
    <alternativeName>
        <fullName>Zinc finger protein 91 homolog</fullName>
        <shortName>Zfp-91</shortName>
    </alternativeName>
    <alternativeName>
        <fullName>Zinc finger protein PZF</fullName>
    </alternativeName>
</protein>
<keyword id="KW-0025">Alternative splicing</keyword>
<keyword id="KW-0479">Metal-binding</keyword>
<keyword id="KW-0539">Nucleus</keyword>
<keyword id="KW-0597">Phosphoprotein</keyword>
<keyword id="KW-1185">Reference proteome</keyword>
<keyword id="KW-0677">Repeat</keyword>
<keyword id="KW-0808">Transferase</keyword>
<keyword id="KW-0833">Ubl conjugation pathway</keyword>
<keyword id="KW-0862">Zinc</keyword>
<keyword id="KW-0863">Zinc-finger</keyword>
<dbReference type="EC" id="2.3.2.27"/>
<dbReference type="EMBL" id="U05342">
    <property type="protein sequence ID" value="AAA81911.1"/>
    <property type="molecule type" value="mRNA"/>
</dbReference>
<dbReference type="EMBL" id="U05343">
    <property type="protein sequence ID" value="AAA81913.1"/>
    <property type="molecule type" value="mRNA"/>
</dbReference>
<dbReference type="EMBL" id="AK029319">
    <property type="protein sequence ID" value="BAC26394.1"/>
    <property type="status" value="ALT_FRAME"/>
    <property type="molecule type" value="mRNA"/>
</dbReference>
<dbReference type="EMBL" id="AK051904">
    <property type="protein sequence ID" value="BAC34808.1"/>
    <property type="status" value="ALT_INIT"/>
    <property type="molecule type" value="mRNA"/>
</dbReference>
<dbReference type="EMBL" id="AK088933">
    <property type="protein sequence ID" value="BAC40660.1"/>
    <property type="status" value="ALT_FRAME"/>
    <property type="molecule type" value="mRNA"/>
</dbReference>
<dbReference type="EMBL" id="AK147502">
    <property type="protein sequence ID" value="BAE27956.1"/>
    <property type="molecule type" value="mRNA"/>
</dbReference>
<dbReference type="EMBL" id="AK147560">
    <property type="protein sequence ID" value="BAE27996.1"/>
    <property type="molecule type" value="mRNA"/>
</dbReference>
<dbReference type="EMBL" id="AK169477">
    <property type="protein sequence ID" value="BAE41195.1"/>
    <property type="molecule type" value="mRNA"/>
</dbReference>
<dbReference type="EMBL" id="BC057323">
    <property type="protein sequence ID" value="AAH57323.1"/>
    <property type="molecule type" value="mRNA"/>
</dbReference>
<dbReference type="EMBL" id="BC064766">
    <property type="protein sequence ID" value="AAH64766.1"/>
    <property type="molecule type" value="mRNA"/>
</dbReference>
<dbReference type="EMBL" id="BC083000">
    <property type="protein sequence ID" value="AAH83000.1"/>
    <property type="molecule type" value="mRNA"/>
</dbReference>
<dbReference type="CCDS" id="CCDS37927.1">
    <molecule id="Q62511-1"/>
</dbReference>
<dbReference type="PIR" id="I48722">
    <property type="entry name" value="I48722"/>
</dbReference>
<dbReference type="PIR" id="I48724">
    <property type="entry name" value="I48724"/>
</dbReference>
<dbReference type="RefSeq" id="NP_443735.2">
    <molecule id="Q62511-1"/>
    <property type="nucleotide sequence ID" value="NM_053009.3"/>
</dbReference>
<dbReference type="SMR" id="Q62511"/>
<dbReference type="BioGRID" id="225146">
    <property type="interactions" value="2"/>
</dbReference>
<dbReference type="FunCoup" id="Q62511">
    <property type="interactions" value="3287"/>
</dbReference>
<dbReference type="STRING" id="10090.ENSMUSP00000037971"/>
<dbReference type="iPTMnet" id="Q62511"/>
<dbReference type="PhosphoSitePlus" id="Q62511"/>
<dbReference type="jPOST" id="Q62511"/>
<dbReference type="PaxDb" id="10090-ENSMUSP00000037971"/>
<dbReference type="PeptideAtlas" id="Q62511"/>
<dbReference type="ProteomicsDB" id="275363">
    <molecule id="Q62511-1"/>
</dbReference>
<dbReference type="ProteomicsDB" id="275364">
    <molecule id="Q62511-2"/>
</dbReference>
<dbReference type="Pumba" id="Q62511"/>
<dbReference type="DNASU" id="109910"/>
<dbReference type="Ensembl" id="ENSMUST00000038627.9">
    <molecule id="Q62511-1"/>
    <property type="protein sequence ID" value="ENSMUSP00000037971.9"/>
    <property type="gene ID" value="ENSMUSG00000024695.17"/>
</dbReference>
<dbReference type="GeneID" id="109910"/>
<dbReference type="KEGG" id="mmu:109910"/>
<dbReference type="UCSC" id="uc008gup.2">
    <molecule id="Q62511-1"/>
    <property type="organism name" value="mouse"/>
</dbReference>
<dbReference type="AGR" id="MGI:104854"/>
<dbReference type="CTD" id="80829"/>
<dbReference type="MGI" id="MGI:104854">
    <property type="gene designation" value="Zfp91"/>
</dbReference>
<dbReference type="VEuPathDB" id="HostDB:ENSMUSG00000024695"/>
<dbReference type="eggNOG" id="KOG1721">
    <property type="taxonomic scope" value="Eukaryota"/>
</dbReference>
<dbReference type="GeneTree" id="ENSGT00940000156393"/>
<dbReference type="HOGENOM" id="CLU_034557_0_0_1"/>
<dbReference type="InParanoid" id="Q62511"/>
<dbReference type="OMA" id="YCSGAER"/>
<dbReference type="OrthoDB" id="7852576at2759"/>
<dbReference type="PhylomeDB" id="Q62511"/>
<dbReference type="TreeFam" id="TF332664"/>
<dbReference type="UniPathway" id="UPA00143"/>
<dbReference type="BioGRID-ORCS" id="109910">
    <property type="hits" value="4 hits in 78 CRISPR screens"/>
</dbReference>
<dbReference type="PRO" id="PR:Q62511"/>
<dbReference type="Proteomes" id="UP000000589">
    <property type="component" value="Chromosome 19"/>
</dbReference>
<dbReference type="RNAct" id="Q62511">
    <property type="molecule type" value="protein"/>
</dbReference>
<dbReference type="Bgee" id="ENSMUSG00000024695">
    <property type="expression patterns" value="Expressed in ascending aorta and 265 other cell types or tissues"/>
</dbReference>
<dbReference type="GO" id="GO:0005730">
    <property type="term" value="C:nucleolus"/>
    <property type="evidence" value="ECO:0007669"/>
    <property type="project" value="Ensembl"/>
</dbReference>
<dbReference type="GO" id="GO:0005654">
    <property type="term" value="C:nucleoplasm"/>
    <property type="evidence" value="ECO:0007669"/>
    <property type="project" value="Ensembl"/>
</dbReference>
<dbReference type="GO" id="GO:0004842">
    <property type="term" value="F:ubiquitin-protein transferase activity"/>
    <property type="evidence" value="ECO:0000250"/>
    <property type="project" value="UniProtKB"/>
</dbReference>
<dbReference type="GO" id="GO:0008270">
    <property type="term" value="F:zinc ion binding"/>
    <property type="evidence" value="ECO:0007669"/>
    <property type="project" value="UniProtKB-KW"/>
</dbReference>
<dbReference type="GO" id="GO:0007250">
    <property type="term" value="P:activation of NF-kappaB-inducing kinase activity"/>
    <property type="evidence" value="ECO:0000250"/>
    <property type="project" value="UniProtKB"/>
</dbReference>
<dbReference type="GO" id="GO:0070534">
    <property type="term" value="P:protein K63-linked ubiquitination"/>
    <property type="evidence" value="ECO:0000250"/>
    <property type="project" value="UniProtKB"/>
</dbReference>
<dbReference type="FunFam" id="3.30.160.60:FF:000183">
    <property type="entry name" value="E3 ubiquitin-protein ligase ZFP91"/>
    <property type="match status" value="1"/>
</dbReference>
<dbReference type="FunFam" id="3.30.160.60:FF:000356">
    <property type="entry name" value="E3 ubiquitin-protein ligase ZFP91"/>
    <property type="match status" value="1"/>
</dbReference>
<dbReference type="Gene3D" id="3.30.160.60">
    <property type="entry name" value="Classic Zinc Finger"/>
    <property type="match status" value="4"/>
</dbReference>
<dbReference type="InterPro" id="IPR051061">
    <property type="entry name" value="Zinc_finger_trans_reg"/>
</dbReference>
<dbReference type="InterPro" id="IPR036236">
    <property type="entry name" value="Znf_C2H2_sf"/>
</dbReference>
<dbReference type="InterPro" id="IPR013087">
    <property type="entry name" value="Znf_C2H2_type"/>
</dbReference>
<dbReference type="PANTHER" id="PTHR46179:SF11">
    <property type="entry name" value="E3 UBIQUITIN-PROTEIN LIGASE ZFP91"/>
    <property type="match status" value="1"/>
</dbReference>
<dbReference type="PANTHER" id="PTHR46179">
    <property type="entry name" value="ZINC FINGER PROTEIN"/>
    <property type="match status" value="1"/>
</dbReference>
<dbReference type="Pfam" id="PF00096">
    <property type="entry name" value="zf-C2H2"/>
    <property type="match status" value="3"/>
</dbReference>
<dbReference type="SMART" id="SM00355">
    <property type="entry name" value="ZnF_C2H2"/>
    <property type="match status" value="5"/>
</dbReference>
<dbReference type="SUPFAM" id="SSF57667">
    <property type="entry name" value="beta-beta-alpha zinc fingers"/>
    <property type="match status" value="3"/>
</dbReference>
<dbReference type="PROSITE" id="PS00028">
    <property type="entry name" value="ZINC_FINGER_C2H2_1"/>
    <property type="match status" value="5"/>
</dbReference>
<dbReference type="PROSITE" id="PS50157">
    <property type="entry name" value="ZINC_FINGER_C2H2_2"/>
    <property type="match status" value="4"/>
</dbReference>
<gene>
    <name type="primary">Zfp91</name>
    <name type="synonym">Pzf</name>
</gene>
<evidence type="ECO:0000250" key="1"/>
<evidence type="ECO:0000255" key="2">
    <source>
        <dbReference type="PROSITE-ProRule" id="PRU00042"/>
    </source>
</evidence>
<evidence type="ECO:0000256" key="3">
    <source>
        <dbReference type="SAM" id="MobiDB-lite"/>
    </source>
</evidence>
<evidence type="ECO:0000269" key="4">
    <source>
    </source>
</evidence>
<evidence type="ECO:0000303" key="5">
    <source>
    </source>
</evidence>
<evidence type="ECO:0000305" key="6"/>
<evidence type="ECO:0007744" key="7">
    <source>
    </source>
</evidence>
<evidence type="ECO:0007744" key="8">
    <source>
    </source>
</evidence>
<reference key="1">
    <citation type="journal article" date="1995" name="Gene">
        <title>A widely expressed novel C2H2 zinc-finger protein with multiple consensus phosphorylation sites is conserved in mouse and man.</title>
        <authorList>
            <person name="Saotome Y."/>
            <person name="Winter C.G."/>
            <person name="Hirsh D."/>
        </authorList>
    </citation>
    <scope>NUCLEOTIDE SEQUENCE [MRNA] (ISOFORM 2)</scope>
    <scope>TISSUE SPECIFICITY</scope>
    <source>
        <strain>BALB/cJ</strain>
        <tissue>Brain</tissue>
        <tissue>Testis</tissue>
    </source>
</reference>
<reference key="2">
    <citation type="journal article" date="2005" name="Science">
        <title>The transcriptional landscape of the mammalian genome.</title>
        <authorList>
            <person name="Carninci P."/>
            <person name="Kasukawa T."/>
            <person name="Katayama S."/>
            <person name="Gough J."/>
            <person name="Frith M.C."/>
            <person name="Maeda N."/>
            <person name="Oyama R."/>
            <person name="Ravasi T."/>
            <person name="Lenhard B."/>
            <person name="Wells C."/>
            <person name="Kodzius R."/>
            <person name="Shimokawa K."/>
            <person name="Bajic V.B."/>
            <person name="Brenner S.E."/>
            <person name="Batalov S."/>
            <person name="Forrest A.R."/>
            <person name="Zavolan M."/>
            <person name="Davis M.J."/>
            <person name="Wilming L.G."/>
            <person name="Aidinis V."/>
            <person name="Allen J.E."/>
            <person name="Ambesi-Impiombato A."/>
            <person name="Apweiler R."/>
            <person name="Aturaliya R.N."/>
            <person name="Bailey T.L."/>
            <person name="Bansal M."/>
            <person name="Baxter L."/>
            <person name="Beisel K.W."/>
            <person name="Bersano T."/>
            <person name="Bono H."/>
            <person name="Chalk A.M."/>
            <person name="Chiu K.P."/>
            <person name="Choudhary V."/>
            <person name="Christoffels A."/>
            <person name="Clutterbuck D.R."/>
            <person name="Crowe M.L."/>
            <person name="Dalla E."/>
            <person name="Dalrymple B.P."/>
            <person name="de Bono B."/>
            <person name="Della Gatta G."/>
            <person name="di Bernardo D."/>
            <person name="Down T."/>
            <person name="Engstrom P."/>
            <person name="Fagiolini M."/>
            <person name="Faulkner G."/>
            <person name="Fletcher C.F."/>
            <person name="Fukushima T."/>
            <person name="Furuno M."/>
            <person name="Futaki S."/>
            <person name="Gariboldi M."/>
            <person name="Georgii-Hemming P."/>
            <person name="Gingeras T.R."/>
            <person name="Gojobori T."/>
            <person name="Green R.E."/>
            <person name="Gustincich S."/>
            <person name="Harbers M."/>
            <person name="Hayashi Y."/>
            <person name="Hensch T.K."/>
            <person name="Hirokawa N."/>
            <person name="Hill D."/>
            <person name="Huminiecki L."/>
            <person name="Iacono M."/>
            <person name="Ikeo K."/>
            <person name="Iwama A."/>
            <person name="Ishikawa T."/>
            <person name="Jakt M."/>
            <person name="Kanapin A."/>
            <person name="Katoh M."/>
            <person name="Kawasawa Y."/>
            <person name="Kelso J."/>
            <person name="Kitamura H."/>
            <person name="Kitano H."/>
            <person name="Kollias G."/>
            <person name="Krishnan S.P."/>
            <person name="Kruger A."/>
            <person name="Kummerfeld S.K."/>
            <person name="Kurochkin I.V."/>
            <person name="Lareau L.F."/>
            <person name="Lazarevic D."/>
            <person name="Lipovich L."/>
            <person name="Liu J."/>
            <person name="Liuni S."/>
            <person name="McWilliam S."/>
            <person name="Madan Babu M."/>
            <person name="Madera M."/>
            <person name="Marchionni L."/>
            <person name="Matsuda H."/>
            <person name="Matsuzawa S."/>
            <person name="Miki H."/>
            <person name="Mignone F."/>
            <person name="Miyake S."/>
            <person name="Morris K."/>
            <person name="Mottagui-Tabar S."/>
            <person name="Mulder N."/>
            <person name="Nakano N."/>
            <person name="Nakauchi H."/>
            <person name="Ng P."/>
            <person name="Nilsson R."/>
            <person name="Nishiguchi S."/>
            <person name="Nishikawa S."/>
            <person name="Nori F."/>
            <person name="Ohara O."/>
            <person name="Okazaki Y."/>
            <person name="Orlando V."/>
            <person name="Pang K.C."/>
            <person name="Pavan W.J."/>
            <person name="Pavesi G."/>
            <person name="Pesole G."/>
            <person name="Petrovsky N."/>
            <person name="Piazza S."/>
            <person name="Reed J."/>
            <person name="Reid J.F."/>
            <person name="Ring B.Z."/>
            <person name="Ringwald M."/>
            <person name="Rost B."/>
            <person name="Ruan Y."/>
            <person name="Salzberg S.L."/>
            <person name="Sandelin A."/>
            <person name="Schneider C."/>
            <person name="Schoenbach C."/>
            <person name="Sekiguchi K."/>
            <person name="Semple C.A."/>
            <person name="Seno S."/>
            <person name="Sessa L."/>
            <person name="Sheng Y."/>
            <person name="Shibata Y."/>
            <person name="Shimada H."/>
            <person name="Shimada K."/>
            <person name="Silva D."/>
            <person name="Sinclair B."/>
            <person name="Sperling S."/>
            <person name="Stupka E."/>
            <person name="Sugiura K."/>
            <person name="Sultana R."/>
            <person name="Takenaka Y."/>
            <person name="Taki K."/>
            <person name="Tammoja K."/>
            <person name="Tan S.L."/>
            <person name="Tang S."/>
            <person name="Taylor M.S."/>
            <person name="Tegner J."/>
            <person name="Teichmann S.A."/>
            <person name="Ueda H.R."/>
            <person name="van Nimwegen E."/>
            <person name="Verardo R."/>
            <person name="Wei C.L."/>
            <person name="Yagi K."/>
            <person name="Yamanishi H."/>
            <person name="Zabarovsky E."/>
            <person name="Zhu S."/>
            <person name="Zimmer A."/>
            <person name="Hide W."/>
            <person name="Bult C."/>
            <person name="Grimmond S.M."/>
            <person name="Teasdale R.D."/>
            <person name="Liu E.T."/>
            <person name="Brusic V."/>
            <person name="Quackenbush J."/>
            <person name="Wahlestedt C."/>
            <person name="Mattick J.S."/>
            <person name="Hume D.A."/>
            <person name="Kai C."/>
            <person name="Sasaki D."/>
            <person name="Tomaru Y."/>
            <person name="Fukuda S."/>
            <person name="Kanamori-Katayama M."/>
            <person name="Suzuki M."/>
            <person name="Aoki J."/>
            <person name="Arakawa T."/>
            <person name="Iida J."/>
            <person name="Imamura K."/>
            <person name="Itoh M."/>
            <person name="Kato T."/>
            <person name="Kawaji H."/>
            <person name="Kawagashira N."/>
            <person name="Kawashima T."/>
            <person name="Kojima M."/>
            <person name="Kondo S."/>
            <person name="Konno H."/>
            <person name="Nakano K."/>
            <person name="Ninomiya N."/>
            <person name="Nishio T."/>
            <person name="Okada M."/>
            <person name="Plessy C."/>
            <person name="Shibata K."/>
            <person name="Shiraki T."/>
            <person name="Suzuki S."/>
            <person name="Tagami M."/>
            <person name="Waki K."/>
            <person name="Watahiki A."/>
            <person name="Okamura-Oho Y."/>
            <person name="Suzuki H."/>
            <person name="Kawai J."/>
            <person name="Hayashizaki Y."/>
        </authorList>
    </citation>
    <scope>NUCLEOTIDE SEQUENCE [LARGE SCALE MRNA] (ISOFORM 1)</scope>
    <source>
        <strain>C57BL/6J</strain>
        <strain>NOD</strain>
        <tissue>Eye</tissue>
        <tissue>Head</tissue>
        <tissue>Placenta</tissue>
        <tissue>Thymus</tissue>
    </source>
</reference>
<reference key="3">
    <citation type="journal article" date="2004" name="Genome Res.">
        <title>The status, quality, and expansion of the NIH full-length cDNA project: the Mammalian Gene Collection (MGC).</title>
        <authorList>
            <consortium name="The MGC Project Team"/>
        </authorList>
    </citation>
    <scope>NUCLEOTIDE SEQUENCE [LARGE SCALE MRNA] OF 252-572</scope>
    <source>
        <strain>C57BL/6J</strain>
        <strain>FVB/N</strain>
        <tissue>Brain</tissue>
        <tissue>Colon</tissue>
        <tissue>Embryo</tissue>
    </source>
</reference>
<reference key="4">
    <citation type="journal article" date="2007" name="Proc. Natl. Acad. Sci. U.S.A.">
        <title>Large-scale phosphorylation analysis of mouse liver.</title>
        <authorList>
            <person name="Villen J."/>
            <person name="Beausoleil S.A."/>
            <person name="Gerber S.A."/>
            <person name="Gygi S.P."/>
        </authorList>
    </citation>
    <scope>PHOSPHORYLATION [LARGE SCALE ANALYSIS] AT SER-106</scope>
    <scope>IDENTIFICATION BY MASS SPECTROMETRY [LARGE SCALE ANALYSIS]</scope>
    <source>
        <tissue>Liver</tissue>
    </source>
</reference>
<reference key="5">
    <citation type="journal article" date="2010" name="Cell">
        <title>A tissue-specific atlas of mouse protein phosphorylation and expression.</title>
        <authorList>
            <person name="Huttlin E.L."/>
            <person name="Jedrychowski M.P."/>
            <person name="Elias J.E."/>
            <person name="Goswami T."/>
            <person name="Rad R."/>
            <person name="Beausoleil S.A."/>
            <person name="Villen J."/>
            <person name="Haas W."/>
            <person name="Sowa M.E."/>
            <person name="Gygi S.P."/>
        </authorList>
    </citation>
    <scope>PHOSPHORYLATION [LARGE SCALE ANALYSIS] AT SER-86 AND SER-106</scope>
    <scope>IDENTIFICATION BY MASS SPECTROMETRY [LARGE SCALE ANALYSIS]</scope>
    <source>
        <tissue>Brain</tissue>
        <tissue>Kidney</tissue>
        <tissue>Lung</tissue>
        <tissue>Spleen</tissue>
    </source>
</reference>
<comment type="function">
    <text evidence="1">Atypical E3 ubiquitin-protein ligase that mediates 'Lys-63'-linked ubiquitination of MAP3K14/NIK, leading to stabilize and activate MAP3K14/NIK. It thereby acts as an activator of the non-canonical NF-kappa-B2/NFKB2 pathway. May also play an important role in cell proliferation and/or anti-apoptosis.</text>
</comment>
<comment type="catalytic activity">
    <reaction>
        <text>S-ubiquitinyl-[E2 ubiquitin-conjugating enzyme]-L-cysteine + [acceptor protein]-L-lysine = [E2 ubiquitin-conjugating enzyme]-L-cysteine + N(6)-ubiquitinyl-[acceptor protein]-L-lysine.</text>
        <dbReference type="EC" id="2.3.2.27"/>
    </reaction>
</comment>
<comment type="pathway">
    <text>Protein modification; protein ubiquitination.</text>
</comment>
<comment type="subunit">
    <text evidence="1">Interacts with MAP3K14/NIK.</text>
</comment>
<comment type="subcellular location">
    <subcellularLocation>
        <location evidence="6">Nucleus</location>
    </subcellularLocation>
</comment>
<comment type="alternative products">
    <event type="alternative splicing"/>
    <isoform>
        <id>Q62511-1</id>
        <name>1</name>
        <sequence type="displayed"/>
    </isoform>
    <isoform>
        <id>Q62511-2</id>
        <name>2</name>
        <sequence type="described" ref="VSP_025759 VSP_025760"/>
    </isoform>
</comment>
<comment type="tissue specificity">
    <text evidence="4">Found in all the examined tissues including brain, heart, kidney, lung, liver, spleen, thymus, skeletal muscle, ovary and testis.</text>
</comment>
<comment type="miscellaneous">
    <text>In contrast to other E3 ubiquitin-protein ligase, does not contain any domain (RING-type zinc finger or HECT domain) known to mediate E3 ligase activity.</text>
</comment>
<comment type="similarity">
    <text evidence="6">Belongs to the krueppel C2H2-type zinc-finger protein family.</text>
</comment>
<comment type="sequence caution" evidence="6">
    <conflict type="frameshift">
        <sequence resource="EMBL-CDS" id="BAC26394"/>
    </conflict>
</comment>
<comment type="sequence caution" evidence="6">
    <conflict type="erroneous initiation">
        <sequence resource="EMBL-CDS" id="BAC34808"/>
    </conflict>
</comment>
<comment type="sequence caution" evidence="6">
    <conflict type="frameshift">
        <sequence resource="EMBL-CDS" id="BAC40660"/>
    </conflict>
</comment>
<proteinExistence type="evidence at protein level"/>
<feature type="chain" id="PRO_0000047313" description="E3 ubiquitin-protein ligase ZFP91">
    <location>
        <begin position="1"/>
        <end position="572"/>
    </location>
</feature>
<feature type="zinc finger region" description="C2H2-type 1" evidence="2">
    <location>
        <begin position="313"/>
        <end position="338"/>
    </location>
</feature>
<feature type="zinc finger region" description="C2H2-type 2" evidence="2">
    <location>
        <begin position="344"/>
        <end position="368"/>
    </location>
</feature>
<feature type="zinc finger region" description="C2H2-type 3" evidence="2">
    <location>
        <begin position="374"/>
        <end position="396"/>
    </location>
</feature>
<feature type="zinc finger region" description="C2H2-type 4" evidence="2">
    <location>
        <begin position="402"/>
        <end position="424"/>
    </location>
</feature>
<feature type="zinc finger region" description="C2H2-type 5" evidence="2">
    <location>
        <begin position="432"/>
        <end position="455"/>
    </location>
</feature>
<feature type="region of interest" description="Disordered" evidence="3">
    <location>
        <begin position="1"/>
        <end position="308"/>
    </location>
</feature>
<feature type="region of interest" description="Interaction with MAP3K14/NIK" evidence="1">
    <location>
        <begin position="340"/>
        <end position="370"/>
    </location>
</feature>
<feature type="compositionally biased region" description="Basic and acidic residues" evidence="3">
    <location>
        <begin position="1"/>
        <end position="12"/>
    </location>
</feature>
<feature type="compositionally biased region" description="Low complexity" evidence="3">
    <location>
        <begin position="61"/>
        <end position="70"/>
    </location>
</feature>
<feature type="compositionally biased region" description="Basic residues" evidence="3">
    <location>
        <begin position="72"/>
        <end position="85"/>
    </location>
</feature>
<feature type="compositionally biased region" description="Basic and acidic residues" evidence="3">
    <location>
        <begin position="122"/>
        <end position="131"/>
    </location>
</feature>
<feature type="compositionally biased region" description="Low complexity" evidence="3">
    <location>
        <begin position="143"/>
        <end position="162"/>
    </location>
</feature>
<feature type="compositionally biased region" description="Acidic residues" evidence="3">
    <location>
        <begin position="209"/>
        <end position="225"/>
    </location>
</feature>
<feature type="compositionally biased region" description="Basic and acidic residues" evidence="3">
    <location>
        <begin position="226"/>
        <end position="247"/>
    </location>
</feature>
<feature type="compositionally biased region" description="Basic and acidic residues" evidence="3">
    <location>
        <begin position="254"/>
        <end position="271"/>
    </location>
</feature>
<feature type="compositionally biased region" description="Acidic residues" evidence="3">
    <location>
        <begin position="272"/>
        <end position="284"/>
    </location>
</feature>
<feature type="modified residue" description="Phosphoserine" evidence="8">
    <location>
        <position position="86"/>
    </location>
</feature>
<feature type="modified residue" description="Phosphoserine" evidence="7 8">
    <location>
        <position position="106"/>
    </location>
</feature>
<feature type="splice variant" id="VSP_025759" description="In isoform 2." evidence="5">
    <location>
        <begin position="1"/>
        <end position="111"/>
    </location>
</feature>
<feature type="splice variant" id="VSP_025760" description="In isoform 2." evidence="5">
    <original>KSPRLQCIEKLTTDKDP</original>
    <variation>MKTKKECEEDD</variation>
    <location>
        <begin position="112"/>
        <end position="128"/>
    </location>
</feature>
<feature type="sequence conflict" description="In Ref. 2; BAE41195." evidence="6" ref="2">
    <original>P</original>
    <variation>A</variation>
    <location>
        <position position="104"/>
    </location>
</feature>
<feature type="sequence conflict" description="In Ref. 2; BAC40660." evidence="6" ref="2">
    <original>E</original>
    <variation>Q</variation>
    <location>
        <position position="218"/>
    </location>
</feature>
<feature type="sequence conflict" description="In Ref. 1; AAA81911/AAA81913." evidence="6" ref="1">
    <original>K</original>
    <variation>T</variation>
    <location>
        <position position="256"/>
    </location>
</feature>
<feature type="sequence conflict" description="In Ref. 2; BAC40660." evidence="6" ref="2">
    <original>K</original>
    <variation>R</variation>
    <location>
        <position position="297"/>
    </location>
</feature>
<feature type="sequence conflict" description="In Ref. 1; AAA81911." evidence="6" ref="1">
    <original>Q</original>
    <variation>E</variation>
    <location>
        <position position="331"/>
    </location>
</feature>
<feature type="sequence conflict" description="In Ref. 1; AAA81911/AAA81913." evidence="6" ref="1">
    <original>A</original>
    <variation>V</variation>
    <location>
        <position position="466"/>
    </location>
</feature>
<feature type="sequence conflict" description="In Ref. 2; BAC26394." evidence="6" ref="2">
    <original>P</original>
    <variation>T</variation>
    <location>
        <position position="498"/>
    </location>
</feature>
<feature type="sequence conflict" description="In Ref. 1; AAA81911." evidence="6" ref="1">
    <original>VS</original>
    <variation>LI</variation>
    <location>
        <begin position="528"/>
        <end position="529"/>
    </location>
</feature>
<name>ZFP91_MOUSE</name>
<sequence length="572" mass="63389">MPGETEEPRSPEQQDQEGGPAAAADAASEELRPGAAAAPAAPAETASSRVLRGGRDRGRTAAAAAAAAAAVSRRRKAEYPRRRRSSPSNRPPDGPGHQPAAAKPPSPAQGKKSPRLQCIEKLTTDKDPKEEKEDDSVLPQEVSITTTRASRSWRSSSRTSISRLRDSENTRSSRSKTGSLQLVCKTEPITDQLDYDVPEEHQSPGGISSDEEEEEEEEMLISEEEIPFKDDPRDETYKPHLERETPKPRRKSGKVKEEKEKKEIKVEVEVEVKEEENEIREDEEPPRKRGRRRKDDKSPRLPKRRKKPPIQYVRCEMEGCGTVLAHPRYLQHHIKYQHLLKKKYVCPHPSCGRLFRLQKQLLRHAKHHTDQRDYICEYCARAFKSSHNLAVHRMIHTGEKPLQCEICGFTCRQKASLNWHMKKHDADSFYQFSCNICGKKFEKKDSVVAHKAKSHPEVLIAEALAANAGALITSTDILGTNPEPLTQPADGQGLPLLPEPLGNSTAGECLLLEAEGMSKSYCSGTERVSLMADGKIFVGSGSSGGTEGLVMNSDILGATTEVLIEDTDSTGP</sequence>
<organism>
    <name type="scientific">Mus musculus</name>
    <name type="common">Mouse</name>
    <dbReference type="NCBI Taxonomy" id="10090"/>
    <lineage>
        <taxon>Eukaryota</taxon>
        <taxon>Metazoa</taxon>
        <taxon>Chordata</taxon>
        <taxon>Craniata</taxon>
        <taxon>Vertebrata</taxon>
        <taxon>Euteleostomi</taxon>
        <taxon>Mammalia</taxon>
        <taxon>Eutheria</taxon>
        <taxon>Euarchontoglires</taxon>
        <taxon>Glires</taxon>
        <taxon>Rodentia</taxon>
        <taxon>Myomorpha</taxon>
        <taxon>Muroidea</taxon>
        <taxon>Muridae</taxon>
        <taxon>Murinae</taxon>
        <taxon>Mus</taxon>
        <taxon>Mus</taxon>
    </lineage>
</organism>